<evidence type="ECO:0000250" key="1">
    <source>
        <dbReference type="UniProtKB" id="P00327"/>
    </source>
</evidence>
<evidence type="ECO:0000250" key="2">
    <source>
        <dbReference type="UniProtKB" id="P06525"/>
    </source>
</evidence>
<evidence type="ECO:0000269" key="3">
    <source>
    </source>
</evidence>
<evidence type="ECO:0000305" key="4"/>
<keyword id="KW-0963">Cytoplasm</keyword>
<keyword id="KW-0479">Metal-binding</keyword>
<keyword id="KW-0520">NAD</keyword>
<keyword id="KW-0560">Oxidoreductase</keyword>
<keyword id="KW-1185">Reference proteome</keyword>
<keyword id="KW-0862">Zinc</keyword>
<proteinExistence type="evidence at transcript level"/>
<name>ADH1_MAIZE</name>
<feature type="chain" id="PRO_0000160703" description="Alcohol dehydrogenase 1">
    <location>
        <begin position="1"/>
        <end position="379"/>
    </location>
</feature>
<feature type="binding site" evidence="2">
    <location>
        <position position="47"/>
    </location>
    <ligand>
        <name>Zn(2+)</name>
        <dbReference type="ChEBI" id="CHEBI:29105"/>
        <label>1</label>
        <note>catalytic</note>
    </ligand>
</feature>
<feature type="binding site" evidence="2">
    <location>
        <position position="49"/>
    </location>
    <ligand>
        <name>an alcohol</name>
        <dbReference type="ChEBI" id="CHEBI:30879"/>
    </ligand>
</feature>
<feature type="binding site" evidence="2">
    <location>
        <position position="49"/>
    </location>
    <ligand>
        <name>NAD(+)</name>
        <dbReference type="ChEBI" id="CHEBI:57540"/>
    </ligand>
</feature>
<feature type="binding site" evidence="2">
    <location>
        <position position="49"/>
    </location>
    <ligand>
        <name>Zn(2+)</name>
        <dbReference type="ChEBI" id="CHEBI:29105"/>
        <label>1</label>
        <note>catalytic</note>
    </ligand>
</feature>
<feature type="binding site" evidence="1">
    <location>
        <position position="69"/>
    </location>
    <ligand>
        <name>an alcohol</name>
        <dbReference type="ChEBI" id="CHEBI:30879"/>
    </ligand>
</feature>
<feature type="binding site" evidence="2">
    <location>
        <position position="69"/>
    </location>
    <ligand>
        <name>Zn(2+)</name>
        <dbReference type="ChEBI" id="CHEBI:29105"/>
        <label>1</label>
        <note>catalytic</note>
    </ligand>
</feature>
<feature type="binding site" evidence="2">
    <location>
        <position position="99"/>
    </location>
    <ligand>
        <name>Zn(2+)</name>
        <dbReference type="ChEBI" id="CHEBI:29105"/>
        <label>2</label>
    </ligand>
</feature>
<feature type="binding site" evidence="2">
    <location>
        <position position="102"/>
    </location>
    <ligand>
        <name>Zn(2+)</name>
        <dbReference type="ChEBI" id="CHEBI:29105"/>
        <label>2</label>
    </ligand>
</feature>
<feature type="binding site" evidence="2">
    <location>
        <position position="105"/>
    </location>
    <ligand>
        <name>Zn(2+)</name>
        <dbReference type="ChEBI" id="CHEBI:29105"/>
        <label>2</label>
    </ligand>
</feature>
<feature type="binding site" evidence="2">
    <location>
        <position position="113"/>
    </location>
    <ligand>
        <name>Zn(2+)</name>
        <dbReference type="ChEBI" id="CHEBI:29105"/>
        <label>2</label>
    </ligand>
</feature>
<feature type="binding site" evidence="2">
    <location>
        <position position="177"/>
    </location>
    <ligand>
        <name>Zn(2+)</name>
        <dbReference type="ChEBI" id="CHEBI:29105"/>
        <label>1</label>
        <note>catalytic</note>
    </ligand>
</feature>
<feature type="binding site" evidence="2">
    <location>
        <begin position="202"/>
        <end position="207"/>
    </location>
    <ligand>
        <name>NAD(+)</name>
        <dbReference type="ChEBI" id="CHEBI:57540"/>
    </ligand>
</feature>
<feature type="binding site" evidence="2">
    <location>
        <position position="226"/>
    </location>
    <ligand>
        <name>NAD(+)</name>
        <dbReference type="ChEBI" id="CHEBI:57540"/>
    </ligand>
</feature>
<feature type="binding site" evidence="2">
    <location>
        <position position="231"/>
    </location>
    <ligand>
        <name>NAD(+)</name>
        <dbReference type="ChEBI" id="CHEBI:57540"/>
    </ligand>
</feature>
<feature type="binding site" evidence="2">
    <location>
        <position position="272"/>
    </location>
    <ligand>
        <name>NAD(+)</name>
        <dbReference type="ChEBI" id="CHEBI:57540"/>
    </ligand>
</feature>
<feature type="binding site" evidence="1">
    <location>
        <begin position="295"/>
        <end position="297"/>
    </location>
    <ligand>
        <name>NAD(+)</name>
        <dbReference type="ChEBI" id="CHEBI:57540"/>
    </ligand>
</feature>
<feature type="binding site" evidence="2">
    <location>
        <position position="295"/>
    </location>
    <ligand>
        <name>NAD(+)</name>
        <dbReference type="ChEBI" id="CHEBI:57540"/>
    </ligand>
</feature>
<feature type="binding site" evidence="2">
    <location>
        <position position="322"/>
    </location>
    <ligand>
        <name>NAD(+)</name>
        <dbReference type="ChEBI" id="CHEBI:57540"/>
    </ligand>
</feature>
<feature type="binding site" evidence="2">
    <location>
        <position position="372"/>
    </location>
    <ligand>
        <name>NAD(+)</name>
        <dbReference type="ChEBI" id="CHEBI:57540"/>
    </ligand>
</feature>
<feature type="sequence variant" description="In allele ADH1-Cm.">
    <original>Y</original>
    <variation>D</variation>
    <location>
        <position position="52"/>
    </location>
</feature>
<feature type="sequence variant" description="In allele ADH1-S.">
    <original>A</original>
    <variation>G</variation>
    <location>
        <position position="127"/>
    </location>
</feature>
<feature type="sequence variant" description="In allele ADH1-Cm and allele ADH1-S.">
    <original>Y</original>
    <variation>I</variation>
    <location>
        <position position="179"/>
    </location>
</feature>
<feature type="sequence variant" description="In allele ADH1-S.">
    <original>D</original>
    <variation>N</variation>
    <location>
        <position position="363"/>
    </location>
</feature>
<dbReference type="EC" id="1.1.1.1" evidence="2"/>
<dbReference type="EMBL" id="X04049">
    <property type="protein sequence ID" value="CAA27681.1"/>
    <property type="molecule type" value="Genomic_DNA"/>
</dbReference>
<dbReference type="EMBL" id="X00580">
    <property type="protein sequence ID" value="CAA25239.1"/>
    <property type="molecule type" value="mRNA"/>
</dbReference>
<dbReference type="EMBL" id="X04050">
    <property type="protein sequence ID" value="CAA27682.1"/>
    <property type="molecule type" value="Genomic_DNA"/>
</dbReference>
<dbReference type="EMBL" id="M32984">
    <property type="protein sequence ID" value="AAA33434.1"/>
    <property type="molecule type" value="Genomic_DNA"/>
</dbReference>
<dbReference type="PIR" id="S04571">
    <property type="entry name" value="S04571"/>
</dbReference>
<dbReference type="RefSeq" id="NP_001105409.1">
    <property type="nucleotide sequence ID" value="NM_001111939.1"/>
</dbReference>
<dbReference type="RefSeq" id="XP_008648693.1">
    <property type="nucleotide sequence ID" value="XM_008650471.1"/>
</dbReference>
<dbReference type="SMR" id="P00333"/>
<dbReference type="FunCoup" id="P00333">
    <property type="interactions" value="230"/>
</dbReference>
<dbReference type="STRING" id="4577.P00333"/>
<dbReference type="PaxDb" id="4577-GRMZM2G442658_P06"/>
<dbReference type="GeneID" id="542363"/>
<dbReference type="KEGG" id="zma:542363"/>
<dbReference type="MaizeGDB" id="13844"/>
<dbReference type="eggNOG" id="KOG0022">
    <property type="taxonomic scope" value="Eukaryota"/>
</dbReference>
<dbReference type="InParanoid" id="P00333"/>
<dbReference type="OrthoDB" id="417550at2759"/>
<dbReference type="BioCyc" id="MetaCyc:MONOMER-15098"/>
<dbReference type="Proteomes" id="UP000007305">
    <property type="component" value="Unplaced"/>
</dbReference>
<dbReference type="ExpressionAtlas" id="P00333">
    <property type="expression patterns" value="baseline and differential"/>
</dbReference>
<dbReference type="GO" id="GO:0005829">
    <property type="term" value="C:cytosol"/>
    <property type="evidence" value="ECO:0000318"/>
    <property type="project" value="GO_Central"/>
</dbReference>
<dbReference type="GO" id="GO:0004022">
    <property type="term" value="F:alcohol dehydrogenase (NAD+) activity"/>
    <property type="evidence" value="ECO:0000318"/>
    <property type="project" value="GO_Central"/>
</dbReference>
<dbReference type="GO" id="GO:0051903">
    <property type="term" value="F:S-(hydroxymethyl)glutathione dehydrogenase [NAD(P)+] activity"/>
    <property type="evidence" value="ECO:0000318"/>
    <property type="project" value="GO_Central"/>
</dbReference>
<dbReference type="GO" id="GO:0008270">
    <property type="term" value="F:zinc ion binding"/>
    <property type="evidence" value="ECO:0000318"/>
    <property type="project" value="GO_Central"/>
</dbReference>
<dbReference type="GO" id="GO:0046294">
    <property type="term" value="P:formaldehyde catabolic process"/>
    <property type="evidence" value="ECO:0000318"/>
    <property type="project" value="GO_Central"/>
</dbReference>
<dbReference type="CDD" id="cd08301">
    <property type="entry name" value="alcohol_DH_plants"/>
    <property type="match status" value="1"/>
</dbReference>
<dbReference type="FunFam" id="3.90.180.10:FF:000067">
    <property type="entry name" value="alcohol dehydrogenase 1-like isoform X1"/>
    <property type="match status" value="1"/>
</dbReference>
<dbReference type="FunFam" id="3.40.50.720:FF:001292">
    <property type="entry name" value="Alcohol dehydrogenase class-P"/>
    <property type="match status" value="1"/>
</dbReference>
<dbReference type="Gene3D" id="3.90.180.10">
    <property type="entry name" value="Medium-chain alcohol dehydrogenases, catalytic domain"/>
    <property type="match status" value="1"/>
</dbReference>
<dbReference type="Gene3D" id="3.40.50.720">
    <property type="entry name" value="NAD(P)-binding Rossmann-like Domain"/>
    <property type="match status" value="1"/>
</dbReference>
<dbReference type="InterPro" id="IPR013149">
    <property type="entry name" value="ADH-like_C"/>
</dbReference>
<dbReference type="InterPro" id="IPR013154">
    <property type="entry name" value="ADH-like_N"/>
</dbReference>
<dbReference type="InterPro" id="IPR002328">
    <property type="entry name" value="ADH_Zn_CS"/>
</dbReference>
<dbReference type="InterPro" id="IPR011032">
    <property type="entry name" value="GroES-like_sf"/>
</dbReference>
<dbReference type="InterPro" id="IPR036291">
    <property type="entry name" value="NAD(P)-bd_dom_sf"/>
</dbReference>
<dbReference type="PANTHER" id="PTHR43880">
    <property type="entry name" value="ALCOHOL DEHYDROGENASE"/>
    <property type="match status" value="1"/>
</dbReference>
<dbReference type="PANTHER" id="PTHR43880:SF9">
    <property type="entry name" value="ALCOHOL DEHYDROGENASE 1"/>
    <property type="match status" value="1"/>
</dbReference>
<dbReference type="Pfam" id="PF08240">
    <property type="entry name" value="ADH_N"/>
    <property type="match status" value="1"/>
</dbReference>
<dbReference type="Pfam" id="PF00107">
    <property type="entry name" value="ADH_zinc_N"/>
    <property type="match status" value="1"/>
</dbReference>
<dbReference type="SUPFAM" id="SSF50129">
    <property type="entry name" value="GroES-like"/>
    <property type="match status" value="2"/>
</dbReference>
<dbReference type="SUPFAM" id="SSF51735">
    <property type="entry name" value="NAD(P)-binding Rossmann-fold domains"/>
    <property type="match status" value="1"/>
</dbReference>
<dbReference type="PROSITE" id="PS00059">
    <property type="entry name" value="ADH_ZINC"/>
    <property type="match status" value="1"/>
</dbReference>
<protein>
    <recommendedName>
        <fullName>Alcohol dehydrogenase 1</fullName>
        <ecNumber evidence="2">1.1.1.1</ecNumber>
    </recommendedName>
</protein>
<accession>P00333</accession>
<organism>
    <name type="scientific">Zea mays</name>
    <name type="common">Maize</name>
    <dbReference type="NCBI Taxonomy" id="4577"/>
    <lineage>
        <taxon>Eukaryota</taxon>
        <taxon>Viridiplantae</taxon>
        <taxon>Streptophyta</taxon>
        <taxon>Embryophyta</taxon>
        <taxon>Tracheophyta</taxon>
        <taxon>Spermatophyta</taxon>
        <taxon>Magnoliopsida</taxon>
        <taxon>Liliopsida</taxon>
        <taxon>Poales</taxon>
        <taxon>Poaceae</taxon>
        <taxon>PACMAD clade</taxon>
        <taxon>Panicoideae</taxon>
        <taxon>Andropogonodae</taxon>
        <taxon>Andropogoneae</taxon>
        <taxon>Tripsacinae</taxon>
        <taxon>Zea</taxon>
    </lineage>
</organism>
<gene>
    <name type="primary">ADH1</name>
</gene>
<sequence length="379" mass="40981">MATAGKVIKCKAAVAWEAGKPLSIEEVEVAPPQAMEVRVKILFTSLCHTDVYFWEAKGQTPVFPRIFGHEAGGIIESVGEGVTDVAPGDHVLPVFTGECKECAHCKSAESNMCDLLRINTDRGVMIADGKSRFSINGKPIYHFVGTSTFSEYTVMHVGCVAKINPQAPLDKVCVLSCGYSTGLGASINVAKPPKGSTVAVFGLGAVGLAAAEGARIAGASRIIGVDLNPSRFEEARKFGCTEFVNPKDHNKPVQEVLAEMTNGGVDRSVECTGNINAMIQAFECVHDGWGVAVLVGVPHKDAEFKTHPMNFLNERTLKGTFFGNYKPRTDLPNVVELYMKKELEVEKFITHSVPFAEINKAFDLMAKGEGIRCIIRMEN</sequence>
<reference key="1">
    <citation type="journal article" date="1984" name="Nucleic Acids Res.">
        <title>Molecular analysis of the alcohol dehydrogenase (Adh1) gene of maize.</title>
        <authorList>
            <person name="Dennis E.S."/>
            <person name="Gerlach W.L."/>
            <person name="Pryor A.J."/>
            <person name="Bennetzen J.L."/>
            <person name="Inglis A."/>
            <person name="Llewellyn D.J."/>
            <person name="Sachs M.M."/>
            <person name="Ferl R.J."/>
            <person name="Peacock W.J."/>
        </authorList>
    </citation>
    <scope>NUCLEOTIDE SEQUENCE [MRNA]</scope>
</reference>
<reference key="2">
    <citation type="journal article" date="1985" name="Nucleic Acids Res.">
        <title>Molecular analysis of the alcohol dehydrogenase 2 (Adh2) gene of maize.</title>
        <authorList>
            <person name="Dennis E.S."/>
            <person name="Sachs M.M."/>
            <person name="Gerlach W.L."/>
            <person name="Finnegan E.J."/>
            <person name="Peacock W.J."/>
        </authorList>
    </citation>
    <scope>NUCLEOTIDE SEQUENCE</scope>
</reference>
<reference key="3">
    <citation type="journal article" date="1984" name="EMBO J.">
        <title>Correlation of exons with structural domains in alcohol dehydrogenase.</title>
        <authorList>
            <person name="Braenden C.-I."/>
            <person name="Eklund H."/>
            <person name="Cambillau C."/>
            <person name="Pryor A.J."/>
        </authorList>
    </citation>
    <scope>NUCLEOTIDE SEQUENCE</scope>
</reference>
<reference key="4">
    <citation type="journal article" date="1986" name="Genetics">
        <title>Two alleles of maize alcohol dehydrogenase 1 have 3'-structural and poly(A) addition polymorphisms.</title>
        <authorList>
            <person name="Sachs M.M."/>
            <person name="Dennis E.S."/>
            <person name="Gerlach W.L."/>
            <person name="Peacock W.J."/>
        </authorList>
    </citation>
    <scope>NUCLEOTIDE SEQUENCE (ALLELE ADH1-F)</scope>
    <scope>POLYMORPHISM</scope>
    <source>
        <strain>cv. Berkeley Fast</strain>
    </source>
</reference>
<reference key="5">
    <citation type="journal article" date="1989" name="Plant Mol. Biol.">
        <title>Molecular analysis of the ADH1-Cm allele of maize.</title>
        <authorList>
            <person name="Osterman J.C."/>
            <person name="Dennis E.S."/>
        </authorList>
    </citation>
    <scope>NUCLEOTIDE SEQUENCE (ALLELE ADH1-CM)</scope>
</reference>
<reference key="6">
    <citation type="journal article" date="1982" name="Proc. Natl. Acad. Sci. U.S.A.">
        <title>cDNA cloning and induction of the alcohol dehydrogenase gene (Adh1) of maize.</title>
        <authorList>
            <person name="Gerlach W.L."/>
            <person name="Pryor A.J."/>
            <person name="Dennis E.S."/>
            <person name="Ferl R.J."/>
            <person name="Sachs M.M."/>
            <person name="Peacock W.J."/>
        </authorList>
    </citation>
    <scope>NUCLEOTIDE SEQUENCE OF 212-379</scope>
</reference>
<comment type="catalytic activity">
    <reaction evidence="2">
        <text>a primary alcohol + NAD(+) = an aldehyde + NADH + H(+)</text>
        <dbReference type="Rhea" id="RHEA:10736"/>
        <dbReference type="ChEBI" id="CHEBI:15378"/>
        <dbReference type="ChEBI" id="CHEBI:15734"/>
        <dbReference type="ChEBI" id="CHEBI:17478"/>
        <dbReference type="ChEBI" id="CHEBI:57540"/>
        <dbReference type="ChEBI" id="CHEBI:57945"/>
        <dbReference type="EC" id="1.1.1.1"/>
    </reaction>
</comment>
<comment type="catalytic activity">
    <reaction evidence="2">
        <text>a secondary alcohol + NAD(+) = a ketone + NADH + H(+)</text>
        <dbReference type="Rhea" id="RHEA:10740"/>
        <dbReference type="ChEBI" id="CHEBI:15378"/>
        <dbReference type="ChEBI" id="CHEBI:17087"/>
        <dbReference type="ChEBI" id="CHEBI:35681"/>
        <dbReference type="ChEBI" id="CHEBI:57540"/>
        <dbReference type="ChEBI" id="CHEBI:57945"/>
        <dbReference type="EC" id="1.1.1.1"/>
    </reaction>
</comment>
<comment type="cofactor">
    <cofactor evidence="2">
        <name>Zn(2+)</name>
        <dbReference type="ChEBI" id="CHEBI:29105"/>
    </cofactor>
    <text evidence="2">Binds 2 Zn(2+) ions per subunit.</text>
</comment>
<comment type="subunit">
    <text evidence="2">Homodimer.</text>
</comment>
<comment type="subcellular location">
    <subcellularLocation>
        <location evidence="2">Cytoplasm</location>
    </subcellularLocation>
</comment>
<comment type="polymorphism">
    <text evidence="3">The sequence shown is that of allele ADH1-F.</text>
</comment>
<comment type="miscellaneous">
    <text evidence="4">In maize there are two isozymes.</text>
</comment>
<comment type="similarity">
    <text evidence="4">Belongs to the zinc-containing alcohol dehydrogenase family.</text>
</comment>